<name>SEPF_STAAS</name>
<organism>
    <name type="scientific">Staphylococcus aureus (strain MSSA476)</name>
    <dbReference type="NCBI Taxonomy" id="282459"/>
    <lineage>
        <taxon>Bacteria</taxon>
        <taxon>Bacillati</taxon>
        <taxon>Bacillota</taxon>
        <taxon>Bacilli</taxon>
        <taxon>Bacillales</taxon>
        <taxon>Staphylococcaceae</taxon>
        <taxon>Staphylococcus</taxon>
    </lineage>
</organism>
<sequence length="187" mass="21023">MSHLALKDLFSGFFVIDDEEEVEVPDKQQQVNEAPAKEQSQQTTKQNAIKSVPQKSASRYTTTSEERNNRMSNYSKNNSRNVVTMNNATPNNASQESSKMCLFEPRVFSDTQDIADELKNRRATLVNLQRIDKVSAKRIIDFLSGTVYAIGGDIQRVGTDIFLCTPDNVEVAGSITDHIENMEHSFD</sequence>
<gene>
    <name evidence="1" type="primary">sepF</name>
    <name type="ordered locus">SAS1123</name>
</gene>
<reference key="1">
    <citation type="journal article" date="2004" name="Proc. Natl. Acad. Sci. U.S.A.">
        <title>Complete genomes of two clinical Staphylococcus aureus strains: evidence for the rapid evolution of virulence and drug resistance.</title>
        <authorList>
            <person name="Holden M.T.G."/>
            <person name="Feil E.J."/>
            <person name="Lindsay J.A."/>
            <person name="Peacock S.J."/>
            <person name="Day N.P.J."/>
            <person name="Enright M.C."/>
            <person name="Foster T.J."/>
            <person name="Moore C.E."/>
            <person name="Hurst L."/>
            <person name="Atkin R."/>
            <person name="Barron A."/>
            <person name="Bason N."/>
            <person name="Bentley S.D."/>
            <person name="Chillingworth C."/>
            <person name="Chillingworth T."/>
            <person name="Churcher C."/>
            <person name="Clark L."/>
            <person name="Corton C."/>
            <person name="Cronin A."/>
            <person name="Doggett J."/>
            <person name="Dowd L."/>
            <person name="Feltwell T."/>
            <person name="Hance Z."/>
            <person name="Harris B."/>
            <person name="Hauser H."/>
            <person name="Holroyd S."/>
            <person name="Jagels K."/>
            <person name="James K.D."/>
            <person name="Lennard N."/>
            <person name="Line A."/>
            <person name="Mayes R."/>
            <person name="Moule S."/>
            <person name="Mungall K."/>
            <person name="Ormond D."/>
            <person name="Quail M.A."/>
            <person name="Rabbinowitsch E."/>
            <person name="Rutherford K.M."/>
            <person name="Sanders M."/>
            <person name="Sharp S."/>
            <person name="Simmonds M."/>
            <person name="Stevens K."/>
            <person name="Whitehead S."/>
            <person name="Barrell B.G."/>
            <person name="Spratt B.G."/>
            <person name="Parkhill J."/>
        </authorList>
    </citation>
    <scope>NUCLEOTIDE SEQUENCE [LARGE SCALE GENOMIC DNA]</scope>
    <source>
        <strain>MSSA476</strain>
    </source>
</reference>
<dbReference type="EMBL" id="BX571857">
    <property type="protein sequence ID" value="CAG42900.1"/>
    <property type="molecule type" value="Genomic_DNA"/>
</dbReference>
<dbReference type="RefSeq" id="WP_000018608.1">
    <property type="nucleotide sequence ID" value="NC_002953.3"/>
</dbReference>
<dbReference type="SMR" id="Q6GA23"/>
<dbReference type="KEGG" id="sas:SAS1123"/>
<dbReference type="HOGENOM" id="CLU_078499_4_1_9"/>
<dbReference type="GO" id="GO:0005737">
    <property type="term" value="C:cytoplasm"/>
    <property type="evidence" value="ECO:0007669"/>
    <property type="project" value="UniProtKB-SubCell"/>
</dbReference>
<dbReference type="GO" id="GO:0000917">
    <property type="term" value="P:division septum assembly"/>
    <property type="evidence" value="ECO:0007669"/>
    <property type="project" value="UniProtKB-KW"/>
</dbReference>
<dbReference type="GO" id="GO:0043093">
    <property type="term" value="P:FtsZ-dependent cytokinesis"/>
    <property type="evidence" value="ECO:0007669"/>
    <property type="project" value="UniProtKB-UniRule"/>
</dbReference>
<dbReference type="Gene3D" id="3.30.110.150">
    <property type="entry name" value="SepF-like protein"/>
    <property type="match status" value="1"/>
</dbReference>
<dbReference type="HAMAP" id="MF_01197">
    <property type="entry name" value="SepF"/>
    <property type="match status" value="1"/>
</dbReference>
<dbReference type="InterPro" id="IPR023052">
    <property type="entry name" value="Cell_div_SepF"/>
</dbReference>
<dbReference type="InterPro" id="IPR007561">
    <property type="entry name" value="Cell_div_SepF/SepF-rel"/>
</dbReference>
<dbReference type="InterPro" id="IPR038594">
    <property type="entry name" value="SepF-like_sf"/>
</dbReference>
<dbReference type="PANTHER" id="PTHR35798">
    <property type="entry name" value="CELL DIVISION PROTEIN SEPF"/>
    <property type="match status" value="1"/>
</dbReference>
<dbReference type="PANTHER" id="PTHR35798:SF1">
    <property type="entry name" value="CELL DIVISION PROTEIN SEPF"/>
    <property type="match status" value="1"/>
</dbReference>
<dbReference type="Pfam" id="PF04472">
    <property type="entry name" value="SepF"/>
    <property type="match status" value="1"/>
</dbReference>
<accession>Q6GA23</accession>
<evidence type="ECO:0000255" key="1">
    <source>
        <dbReference type="HAMAP-Rule" id="MF_01197"/>
    </source>
</evidence>
<evidence type="ECO:0000256" key="2">
    <source>
        <dbReference type="SAM" id="MobiDB-lite"/>
    </source>
</evidence>
<proteinExistence type="inferred from homology"/>
<comment type="function">
    <text evidence="1">Cell division protein that is part of the divisome complex and is recruited early to the Z-ring. Probably stimulates Z-ring formation, perhaps through the cross-linking of FtsZ protofilaments. Its function overlaps with FtsA.</text>
</comment>
<comment type="subunit">
    <text evidence="1">Homodimer. Interacts with FtsZ.</text>
</comment>
<comment type="subcellular location">
    <subcellularLocation>
        <location evidence="1">Cytoplasm</location>
    </subcellularLocation>
    <text evidence="1">Localizes to the division site, in a FtsZ-dependent manner.</text>
</comment>
<comment type="similarity">
    <text evidence="1">Belongs to the SepF family.</text>
</comment>
<protein>
    <recommendedName>
        <fullName evidence="1">Cell division protein SepF</fullName>
    </recommendedName>
</protein>
<keyword id="KW-0131">Cell cycle</keyword>
<keyword id="KW-0132">Cell division</keyword>
<keyword id="KW-0963">Cytoplasm</keyword>
<keyword id="KW-0717">Septation</keyword>
<feature type="chain" id="PRO_0000334079" description="Cell division protein SepF">
    <location>
        <begin position="1"/>
        <end position="187"/>
    </location>
</feature>
<feature type="region of interest" description="Disordered" evidence="2">
    <location>
        <begin position="21"/>
        <end position="97"/>
    </location>
</feature>
<feature type="compositionally biased region" description="Polar residues" evidence="2">
    <location>
        <begin position="38"/>
        <end position="63"/>
    </location>
</feature>
<feature type="compositionally biased region" description="Polar residues" evidence="2">
    <location>
        <begin position="70"/>
        <end position="97"/>
    </location>
</feature>